<organism>
    <name type="scientific">Xenopus laevis</name>
    <name type="common">African clawed frog</name>
    <dbReference type="NCBI Taxonomy" id="8355"/>
    <lineage>
        <taxon>Eukaryota</taxon>
        <taxon>Metazoa</taxon>
        <taxon>Chordata</taxon>
        <taxon>Craniata</taxon>
        <taxon>Vertebrata</taxon>
        <taxon>Euteleostomi</taxon>
        <taxon>Amphibia</taxon>
        <taxon>Batrachia</taxon>
        <taxon>Anura</taxon>
        <taxon>Pipoidea</taxon>
        <taxon>Pipidae</taxon>
        <taxon>Xenopodinae</taxon>
        <taxon>Xenopus</taxon>
        <taxon>Xenopus</taxon>
    </lineage>
</organism>
<comment type="function">
    <text evidence="2">Antimicrobial peptides that inhibit the growth of numerous species of bacteria and fungi and induce osmotic lysis of protozoa. Rapidly inactivates channel catfish herpesvirus (ED(50)=48 uM) over a wide temperature range (PubMed:15193922). Magainins are membrane lytic agents.</text>
</comment>
<comment type="subcellular location">
    <subcellularLocation>
        <location>Secreted</location>
    </subcellularLocation>
</comment>
<comment type="tissue specificity">
    <text>Synthesized in the stomach and stored in a novel granular multinucleated cell in the gastric mucosa. It is stored as active, processed peptides in large granules within the granular gland secretions of the skin.</text>
</comment>
<comment type="similarity">
    <text evidence="4">Belongs to the gastrin/cholecystokinin family. Magainin subfamily.</text>
</comment>
<comment type="online information" name="Protein Spotlight">
    <link uri="https://www.proteinspotlight.org/back_issues/007"/>
    <text>When a frog swallows a fly - Issue 7 of February 2001</text>
</comment>
<keyword id="KW-0002">3D-structure</keyword>
<keyword id="KW-0878">Amphibian defense peptide</keyword>
<keyword id="KW-0044">Antibiotic</keyword>
<keyword id="KW-0929">Antimicrobial</keyword>
<keyword id="KW-0930">Antiviral protein</keyword>
<keyword id="KW-0165">Cleavage on pair of basic residues</keyword>
<keyword id="KW-0204">Cytolysis</keyword>
<keyword id="KW-0903">Direct protein sequencing</keyword>
<keyword id="KW-0295">Fungicide</keyword>
<keyword id="KW-0354">Hemolysis</keyword>
<keyword id="KW-0391">Immunity</keyword>
<keyword id="KW-0399">Innate immunity</keyword>
<keyword id="KW-1185">Reference proteome</keyword>
<keyword id="KW-0677">Repeat</keyword>
<keyword id="KW-0964">Secreted</keyword>
<keyword id="KW-0732">Signal</keyword>
<feature type="signal peptide" evidence="1">
    <location>
        <begin position="1"/>
        <end position="18"/>
    </location>
</feature>
<feature type="propeptide" id="PRO_0000010677">
    <location>
        <begin position="19"/>
        <end position="26"/>
    </location>
</feature>
<feature type="peptide" id="PRO_0000010678" description="Small acidic peptide 1">
    <location>
        <begin position="27"/>
        <end position="32"/>
    </location>
</feature>
<feature type="propeptide" id="PRO_0000010679">
    <location>
        <begin position="33"/>
        <end position="36"/>
    </location>
</feature>
<feature type="peptide" id="PRO_0000010680" description="Magainin-1">
    <location>
        <begin position="37"/>
        <end position="59"/>
    </location>
</feature>
<feature type="propeptide" id="PRO_0000010681">
    <location>
        <begin position="62"/>
        <end position="72"/>
    </location>
</feature>
<feature type="peptide" id="PRO_0000010682" description="Small acidic peptide 2">
    <location>
        <begin position="73"/>
        <end position="78"/>
    </location>
</feature>
<feature type="propeptide" id="PRO_0000010683">
    <location>
        <begin position="79"/>
        <end position="82"/>
    </location>
</feature>
<feature type="peptide" id="PRO_0000010684" description="Magainin-2">
    <location>
        <begin position="83"/>
        <end position="105"/>
    </location>
</feature>
<feature type="propeptide" id="PRO_0000010685">
    <location>
        <begin position="108"/>
        <end position="118"/>
    </location>
</feature>
<feature type="peptide" id="PRO_0000010686" description="Small acidic peptide 2">
    <location>
        <begin position="119"/>
        <end position="124"/>
    </location>
</feature>
<feature type="propeptide" id="PRO_0000010687">
    <location>
        <begin position="125"/>
        <end position="128"/>
    </location>
</feature>
<feature type="peptide" id="PRO_0000010688" description="Magainin-2">
    <location>
        <begin position="129"/>
        <end position="151"/>
    </location>
</feature>
<feature type="propeptide" id="PRO_0000010689">
    <location>
        <begin position="154"/>
        <end position="164"/>
    </location>
</feature>
<feature type="peptide" id="PRO_0000010690" description="Small acidic peptide 2">
    <location>
        <begin position="165"/>
        <end position="170"/>
    </location>
</feature>
<feature type="propeptide" id="PRO_0000010691">
    <location>
        <begin position="171"/>
        <end position="174"/>
    </location>
</feature>
<feature type="peptide" id="PRO_0000010692" description="Magainin-2">
    <location>
        <begin position="175"/>
        <end position="197"/>
    </location>
</feature>
<feature type="propeptide" id="PRO_0000010693">
    <location>
        <begin position="200"/>
        <end position="210"/>
    </location>
</feature>
<feature type="peptide" id="PRO_0000010694" description="Small acidic peptide 3">
    <location>
        <begin position="211"/>
        <end position="216"/>
    </location>
</feature>
<feature type="propeptide" id="PRO_0000010695">
    <location>
        <begin position="217"/>
        <end position="220"/>
    </location>
</feature>
<feature type="peptide" id="PRO_0000010696" description="Magainin-2">
    <location>
        <begin position="221"/>
        <end position="243"/>
    </location>
</feature>
<feature type="propeptide" id="PRO_0000010697">
    <location>
        <begin position="246"/>
        <end position="256"/>
    </location>
</feature>
<feature type="peptide" id="PRO_0000010698" description="Small acidic peptide 2">
    <location>
        <begin position="257"/>
        <end position="262"/>
    </location>
</feature>
<feature type="propeptide" id="PRO_0000010699">
    <location>
        <begin position="263"/>
        <end position="266"/>
    </location>
</feature>
<feature type="peptide" id="PRO_0000010700" description="Magainin-2">
    <location>
        <begin position="267"/>
        <end position="289"/>
    </location>
</feature>
<feature type="propeptide" id="PRO_0000010701">
    <location>
        <begin position="292"/>
        <end position="303"/>
    </location>
</feature>
<feature type="sequence conflict" description="In Ref. 2; AA sequence." evidence="4" ref="2">
    <original>E</original>
    <variation>Q</variation>
    <location>
        <position position="74"/>
    </location>
</feature>
<feature type="helix" evidence="5">
    <location>
        <begin position="269"/>
        <end position="287"/>
    </location>
</feature>
<reference key="1">
    <citation type="journal article" date="1988" name="J. Biol. Chem.">
        <title>The cDNA sequence coding for prepro-PGS (prepro-magainins) and aspects of the processing of this prepro-polypeptide.</title>
        <authorList>
            <person name="Terry A.S."/>
            <person name="Poulter L."/>
            <person name="Williams D.H."/>
            <person name="Nutkins J.C."/>
            <person name="Giovannini M.G."/>
            <person name="Moore C.H."/>
            <person name="Gibson B.W."/>
        </authorList>
    </citation>
    <scope>NUCLEOTIDE SEQUENCE [MRNA]</scope>
    <scope>PARTIAL PROTEIN SEQUENCE</scope>
</reference>
<reference key="2">
    <citation type="journal article" date="1987" name="Proc. Natl. Acad. Sci. U.S.A.">
        <title>Magainins, a class of antimicrobial peptides from Xenopus skin: isolation, characterization of two active forms, and partial cDNA sequence of a precursor.</title>
        <authorList>
            <person name="Zasloff M."/>
        </authorList>
    </citation>
    <scope>NUCLEOTIDE SEQUENCE [MRNA] OF 6-158 AND 297-303</scope>
    <scope>PARTIAL PROTEIN SEQUENCE</scope>
    <source>
        <tissue>Skin</tissue>
        <tissue>Skin secretion</tissue>
    </source>
</reference>
<reference key="3">
    <citation type="journal article" date="1991" name="J. Biol. Chem.">
        <title>Antimicrobial peptides in the stomach of Xenopus laevis.</title>
        <authorList>
            <person name="Moore K.S."/>
            <person name="Bevins C.L."/>
            <person name="Brasseur M.M."/>
            <person name="Tomassini N."/>
            <person name="Turner K."/>
            <person name="Eck H."/>
            <person name="Zasloff M."/>
        </authorList>
    </citation>
    <scope>PROTEIN SEQUENCE (MAGAININ-1 AND MAGAININ-2)</scope>
    <source>
        <tissue>Stomach</tissue>
    </source>
</reference>
<reference key="4">
    <citation type="journal article" date="2004" name="Virology">
        <title>Inactivation of viruses infecting ectothermic animals by amphibian and piscine antimicrobial peptides.</title>
        <authorList>
            <person name="Chinchar V.G."/>
            <person name="Bryan L."/>
            <person name="Silphadaung U."/>
            <person name="Noga E."/>
            <person name="Wade D."/>
            <person name="Rollins-Smith L."/>
        </authorList>
    </citation>
    <scope>FUNCTION OF MAGAININ-2 AS ANTIVIRAL PEPTIDE</scope>
</reference>
<reference key="5">
    <citation type="journal article" date="1993" name="Protein Sci.">
        <title>Structure and orientation of the antibiotic peptide magainin in membranes by solid-state nuclear magnetic resonance spectroscopy.</title>
        <authorList>
            <person name="Bechinger B."/>
            <person name="Zasloff M."/>
            <person name="Opella S.J."/>
        </authorList>
    </citation>
    <scope>STRUCTURE BY NMR OF MAGAININ-2</scope>
</reference>
<evidence type="ECO:0000255" key="1"/>
<evidence type="ECO:0000269" key="2">
    <source>
    </source>
</evidence>
<evidence type="ECO:0000303" key="3">
    <source>
    </source>
</evidence>
<evidence type="ECO:0000305" key="4"/>
<evidence type="ECO:0007829" key="5">
    <source>
        <dbReference type="PDB" id="5CGO"/>
    </source>
</evidence>
<gene>
    <name type="primary">magainins</name>
</gene>
<proteinExistence type="evidence at protein level"/>
<name>MAGA_XENLA</name>
<dbReference type="EMBL" id="J03193">
    <property type="protein sequence ID" value="AAA49930.1"/>
    <property type="molecule type" value="mRNA"/>
</dbReference>
<dbReference type="PIR" id="A28620">
    <property type="entry name" value="A28620"/>
</dbReference>
<dbReference type="RefSeq" id="NP_001081306.1">
    <property type="nucleotide sequence ID" value="NM_001087837.1"/>
</dbReference>
<dbReference type="PDB" id="1D9J">
    <property type="method" value="NMR"/>
    <property type="chains" value="A=267-278"/>
</dbReference>
<dbReference type="PDB" id="1D9L">
    <property type="method" value="NMR"/>
    <property type="chains" value="A=270-278"/>
</dbReference>
<dbReference type="PDB" id="1D9M">
    <property type="method" value="NMR"/>
    <property type="chains" value="A=270-278"/>
</dbReference>
<dbReference type="PDB" id="1D9O">
    <property type="method" value="NMR"/>
    <property type="chains" value="A=267-278"/>
</dbReference>
<dbReference type="PDB" id="1D9P">
    <property type="method" value="NMR"/>
    <property type="chains" value="A=267-278"/>
</dbReference>
<dbReference type="PDB" id="1DUM">
    <property type="method" value="NMR"/>
    <property type="chains" value="A/B=267-289"/>
</dbReference>
<dbReference type="PDB" id="1F0D">
    <property type="method" value="NMR"/>
    <property type="chains" value="A=267-278"/>
</dbReference>
<dbReference type="PDB" id="1F0E">
    <property type="method" value="NMR"/>
    <property type="chains" value="A=269-278"/>
</dbReference>
<dbReference type="PDB" id="1F0F">
    <property type="method" value="NMR"/>
    <property type="chains" value="A=270-278"/>
</dbReference>
<dbReference type="PDB" id="1F0G">
    <property type="method" value="NMR"/>
    <property type="chains" value="A=267-278"/>
</dbReference>
<dbReference type="PDB" id="1F0H">
    <property type="method" value="NMR"/>
    <property type="chains" value="A=267-278"/>
</dbReference>
<dbReference type="PDB" id="2LSA">
    <property type="method" value="NMR"/>
    <property type="chains" value="A=267-289"/>
</dbReference>
<dbReference type="PDB" id="2MAG">
    <property type="method" value="NMR"/>
    <property type="chains" value="A=267-289"/>
</dbReference>
<dbReference type="PDB" id="4MGP">
    <property type="method" value="X-ray"/>
    <property type="resolution" value="1.75 A"/>
    <property type="chains" value="A=267-289"/>
</dbReference>
<dbReference type="PDB" id="5CGN">
    <property type="method" value="X-ray"/>
    <property type="resolution" value="2.20 A"/>
    <property type="chains" value="E/F/G/H=267-289"/>
</dbReference>
<dbReference type="PDB" id="5CGO">
    <property type="method" value="X-ray"/>
    <property type="resolution" value="1.50 A"/>
    <property type="chains" value="A/B=267-289"/>
</dbReference>
<dbReference type="PDB" id="9HVN">
    <property type="method" value="X-ray"/>
    <property type="resolution" value="1.05 A"/>
    <property type="chains" value="A=267-289"/>
</dbReference>
<dbReference type="PDBsum" id="1D9J"/>
<dbReference type="PDBsum" id="1D9L"/>
<dbReference type="PDBsum" id="1D9M"/>
<dbReference type="PDBsum" id="1D9O"/>
<dbReference type="PDBsum" id="1D9P"/>
<dbReference type="PDBsum" id="1DUM"/>
<dbReference type="PDBsum" id="1F0D"/>
<dbReference type="PDBsum" id="1F0E"/>
<dbReference type="PDBsum" id="1F0F"/>
<dbReference type="PDBsum" id="1F0G"/>
<dbReference type="PDBsum" id="1F0H"/>
<dbReference type="PDBsum" id="2LSA"/>
<dbReference type="PDBsum" id="2MAG"/>
<dbReference type="PDBsum" id="4MGP"/>
<dbReference type="PDBsum" id="5CGN"/>
<dbReference type="PDBsum" id="5CGO"/>
<dbReference type="PDBsum" id="9HVN"/>
<dbReference type="SMR" id="P11006"/>
<dbReference type="TCDB" id="1.C.16.1.1">
    <property type="family name" value="the magainin (magainin) family"/>
</dbReference>
<dbReference type="ABCD" id="P11006">
    <property type="antibodies" value="2 sequenced antibodies"/>
</dbReference>
<dbReference type="GeneID" id="397766"/>
<dbReference type="KEGG" id="xla:397766"/>
<dbReference type="AGR" id="Xenbase:XB-GENE-6252596"/>
<dbReference type="CTD" id="397766"/>
<dbReference type="Xenbase" id="XB-GENE-6252596">
    <property type="gene designation" value="magainins.L"/>
</dbReference>
<dbReference type="EvolutionaryTrace" id="P11006"/>
<dbReference type="Proteomes" id="UP000186698">
    <property type="component" value="Chromosome 6L"/>
</dbReference>
<dbReference type="Bgee" id="397766">
    <property type="expression patterns" value="Expressed in zone of skin and 16 other cell types or tissues"/>
</dbReference>
<dbReference type="GO" id="GO:0043245">
    <property type="term" value="C:extraorganismal space"/>
    <property type="evidence" value="ECO:0000314"/>
    <property type="project" value="Xenbase"/>
</dbReference>
<dbReference type="GO" id="GO:0002777">
    <property type="term" value="P:antimicrobial peptide biosynthetic process"/>
    <property type="evidence" value="ECO:0000304"/>
    <property type="project" value="Xenbase"/>
</dbReference>
<dbReference type="GO" id="GO:0042742">
    <property type="term" value="P:defense response to bacterium"/>
    <property type="evidence" value="ECO:0007669"/>
    <property type="project" value="UniProtKB-KW"/>
</dbReference>
<dbReference type="GO" id="GO:0050832">
    <property type="term" value="P:defense response to fungus"/>
    <property type="evidence" value="ECO:0007669"/>
    <property type="project" value="UniProtKB-KW"/>
</dbReference>
<dbReference type="GO" id="GO:0045087">
    <property type="term" value="P:innate immune response"/>
    <property type="evidence" value="ECO:0000314"/>
    <property type="project" value="Xenbase"/>
</dbReference>
<dbReference type="GO" id="GO:0031640">
    <property type="term" value="P:killing of cells of another organism"/>
    <property type="evidence" value="ECO:0000314"/>
    <property type="project" value="UniProtKB"/>
</dbReference>
<dbReference type="GO" id="GO:0050688">
    <property type="term" value="P:regulation of defense response to virus"/>
    <property type="evidence" value="ECO:0007669"/>
    <property type="project" value="UniProtKB-KW"/>
</dbReference>
<accession>P11006</accession>
<sequence>MFKGLFICSLIAVICANALPQPEASADEDMDEREVRGIGKFLHSAGKFGKAFVGEIMKSKRDAEAVGPEAFADEDLDEREVRGIGKFLHSAKKFGKAFVGEIMNSKRDAEAVGPEAFADEDLDEREVRGIGKFLHSAKKFGKAFVGEIMNSKRDAEAVGPEAFADEDLDEREVRGIGKFLHSAKKFGKAFVGEIMNSKRDAEAVGPEAFADEDFDEREVRGIGKFLHSAKKFGKAFVGEIMNSKRDAEAVGPEAFADEDLDEREVRGIGKFLHSAKKFGKAFVGEIMNSKRDAEAVDDRRWVE</sequence>
<protein>
    <recommendedName>
        <fullName>Magainins</fullName>
    </recommendedName>
    <component>
        <recommendedName>
            <fullName>Small acidic peptide 1</fullName>
        </recommendedName>
    </component>
    <component>
        <recommendedName>
            <fullName>Small acidic peptide 2</fullName>
        </recommendedName>
    </component>
    <component>
        <recommendedName>
            <fullName>Small acidic peptide 3</fullName>
        </recommendedName>
    </component>
    <component>
        <recommendedName>
            <fullName>Magainin-1</fullName>
        </recommendedName>
        <alternativeName>
            <fullName>Magainin I</fullName>
        </alternativeName>
    </component>
    <component>
        <recommendedName>
            <fullName>Magainin-2</fullName>
        </recommendedName>
        <alternativeName>
            <fullName evidence="3">Magainin II</fullName>
        </alternativeName>
    </component>
</protein>